<proteinExistence type="inferred from homology"/>
<gene>
    <name evidence="1" type="primary">atpH</name>
    <name type="ordered locus">Sputw3181_4056</name>
</gene>
<keyword id="KW-0066">ATP synthesis</keyword>
<keyword id="KW-0997">Cell inner membrane</keyword>
<keyword id="KW-1003">Cell membrane</keyword>
<keyword id="KW-0139">CF(1)</keyword>
<keyword id="KW-0375">Hydrogen ion transport</keyword>
<keyword id="KW-0406">Ion transport</keyword>
<keyword id="KW-0472">Membrane</keyword>
<keyword id="KW-0813">Transport</keyword>
<evidence type="ECO:0000255" key="1">
    <source>
        <dbReference type="HAMAP-Rule" id="MF_01416"/>
    </source>
</evidence>
<sequence length="177" mass="19287">MAELTTIARPYAKAAFDFAIEHNAVDNWAEMLTFAALVSENETMQPLLNGALANTKLAALFINVCGEQINKQGQNLIKVMAENGRLSVLPTVSKLFSDFRNEWAKEVEANVVSATELSLEQQQHISVSLEKRLARKVKLNCSTDTALIAGAIIQVGDLVIDGSVRGKLSRLSDTLQS</sequence>
<comment type="function">
    <text evidence="1">F(1)F(0) ATP synthase produces ATP from ADP in the presence of a proton or sodium gradient. F-type ATPases consist of two structural domains, F(1) containing the extramembraneous catalytic core and F(0) containing the membrane proton channel, linked together by a central stalk and a peripheral stalk. During catalysis, ATP synthesis in the catalytic domain of F(1) is coupled via a rotary mechanism of the central stalk subunits to proton translocation.</text>
</comment>
<comment type="function">
    <text evidence="1">This protein is part of the stalk that links CF(0) to CF(1). It either transmits conformational changes from CF(0) to CF(1) or is implicated in proton conduction.</text>
</comment>
<comment type="subunit">
    <text evidence="1">F-type ATPases have 2 components, F(1) - the catalytic core - and F(0) - the membrane proton channel. F(1) has five subunits: alpha(3), beta(3), gamma(1), delta(1), epsilon(1). F(0) has three main subunits: a(1), b(2) and c(10-14). The alpha and beta chains form an alternating ring which encloses part of the gamma chain. F(1) is attached to F(0) by a central stalk formed by the gamma and epsilon chains, while a peripheral stalk is formed by the delta and b chains.</text>
</comment>
<comment type="subcellular location">
    <subcellularLocation>
        <location evidence="1">Cell inner membrane</location>
        <topology evidence="1">Peripheral membrane protein</topology>
    </subcellularLocation>
</comment>
<comment type="similarity">
    <text evidence="1">Belongs to the ATPase delta chain family.</text>
</comment>
<accession>A1RQB3</accession>
<protein>
    <recommendedName>
        <fullName evidence="1">ATP synthase subunit delta</fullName>
    </recommendedName>
    <alternativeName>
        <fullName evidence="1">ATP synthase F(1) sector subunit delta</fullName>
    </alternativeName>
    <alternativeName>
        <fullName evidence="1">F-type ATPase subunit delta</fullName>
        <shortName evidence="1">F-ATPase subunit delta</shortName>
    </alternativeName>
</protein>
<reference key="1">
    <citation type="submission" date="2006-12" db="EMBL/GenBank/DDBJ databases">
        <title>Complete sequence of Shewanella sp. W3-18-1.</title>
        <authorList>
            <consortium name="US DOE Joint Genome Institute"/>
            <person name="Copeland A."/>
            <person name="Lucas S."/>
            <person name="Lapidus A."/>
            <person name="Barry K."/>
            <person name="Detter J.C."/>
            <person name="Glavina del Rio T."/>
            <person name="Hammon N."/>
            <person name="Israni S."/>
            <person name="Dalin E."/>
            <person name="Tice H."/>
            <person name="Pitluck S."/>
            <person name="Chain P."/>
            <person name="Malfatti S."/>
            <person name="Shin M."/>
            <person name="Vergez L."/>
            <person name="Schmutz J."/>
            <person name="Larimer F."/>
            <person name="Land M."/>
            <person name="Hauser L."/>
            <person name="Kyrpides N."/>
            <person name="Lykidis A."/>
            <person name="Tiedje J."/>
            <person name="Richardson P."/>
        </authorList>
    </citation>
    <scope>NUCLEOTIDE SEQUENCE [LARGE SCALE GENOMIC DNA]</scope>
    <source>
        <strain>W3-18-1</strain>
    </source>
</reference>
<organism>
    <name type="scientific">Shewanella sp. (strain W3-18-1)</name>
    <dbReference type="NCBI Taxonomy" id="351745"/>
    <lineage>
        <taxon>Bacteria</taxon>
        <taxon>Pseudomonadati</taxon>
        <taxon>Pseudomonadota</taxon>
        <taxon>Gammaproteobacteria</taxon>
        <taxon>Alteromonadales</taxon>
        <taxon>Shewanellaceae</taxon>
        <taxon>Shewanella</taxon>
    </lineage>
</organism>
<dbReference type="EMBL" id="CP000503">
    <property type="protein sequence ID" value="ABM26858.1"/>
    <property type="molecule type" value="Genomic_DNA"/>
</dbReference>
<dbReference type="RefSeq" id="WP_011791279.1">
    <property type="nucleotide sequence ID" value="NC_008750.1"/>
</dbReference>
<dbReference type="SMR" id="A1RQB3"/>
<dbReference type="GeneID" id="67445464"/>
<dbReference type="KEGG" id="shw:Sputw3181_4056"/>
<dbReference type="HOGENOM" id="CLU_085114_3_0_6"/>
<dbReference type="Proteomes" id="UP000002597">
    <property type="component" value="Chromosome"/>
</dbReference>
<dbReference type="GO" id="GO:0005886">
    <property type="term" value="C:plasma membrane"/>
    <property type="evidence" value="ECO:0007669"/>
    <property type="project" value="UniProtKB-SubCell"/>
</dbReference>
<dbReference type="GO" id="GO:0045259">
    <property type="term" value="C:proton-transporting ATP synthase complex"/>
    <property type="evidence" value="ECO:0007669"/>
    <property type="project" value="UniProtKB-KW"/>
</dbReference>
<dbReference type="GO" id="GO:0046933">
    <property type="term" value="F:proton-transporting ATP synthase activity, rotational mechanism"/>
    <property type="evidence" value="ECO:0007669"/>
    <property type="project" value="UniProtKB-UniRule"/>
</dbReference>
<dbReference type="Gene3D" id="1.10.520.20">
    <property type="entry name" value="N-terminal domain of the delta subunit of the F1F0-ATP synthase"/>
    <property type="match status" value="1"/>
</dbReference>
<dbReference type="HAMAP" id="MF_01416">
    <property type="entry name" value="ATP_synth_delta_bact"/>
    <property type="match status" value="1"/>
</dbReference>
<dbReference type="InterPro" id="IPR026015">
    <property type="entry name" value="ATP_synth_OSCP/delta_N_sf"/>
</dbReference>
<dbReference type="InterPro" id="IPR020781">
    <property type="entry name" value="ATPase_OSCP/d_CS"/>
</dbReference>
<dbReference type="InterPro" id="IPR000711">
    <property type="entry name" value="ATPase_OSCP/dsu"/>
</dbReference>
<dbReference type="NCBIfam" id="TIGR01145">
    <property type="entry name" value="ATP_synt_delta"/>
    <property type="match status" value="1"/>
</dbReference>
<dbReference type="NCBIfam" id="NF004402">
    <property type="entry name" value="PRK05758.2-2"/>
    <property type="match status" value="1"/>
</dbReference>
<dbReference type="NCBIfam" id="NF004404">
    <property type="entry name" value="PRK05758.2-5"/>
    <property type="match status" value="1"/>
</dbReference>
<dbReference type="PANTHER" id="PTHR11910">
    <property type="entry name" value="ATP SYNTHASE DELTA CHAIN"/>
    <property type="match status" value="1"/>
</dbReference>
<dbReference type="Pfam" id="PF00213">
    <property type="entry name" value="OSCP"/>
    <property type="match status" value="1"/>
</dbReference>
<dbReference type="PRINTS" id="PR00125">
    <property type="entry name" value="ATPASEDELTA"/>
</dbReference>
<dbReference type="SUPFAM" id="SSF47928">
    <property type="entry name" value="N-terminal domain of the delta subunit of the F1F0-ATP synthase"/>
    <property type="match status" value="1"/>
</dbReference>
<dbReference type="PROSITE" id="PS00389">
    <property type="entry name" value="ATPASE_DELTA"/>
    <property type="match status" value="1"/>
</dbReference>
<feature type="chain" id="PRO_0000371136" description="ATP synthase subunit delta">
    <location>
        <begin position="1"/>
        <end position="177"/>
    </location>
</feature>
<name>ATPD_SHESW</name>